<sequence length="493" mass="52283">MTTLTDLTLAEARDALLNKDFSAVELVKAQLAEIEQARALNAFIKETPEKALAMAEASDARIARGEAGPLEGVPLGIKDLYCTEGVETTAASHILEGFKPAYESTVSANLWRDGAVMLGKLNLDEFAMGSSNETSYFGPVVSPWRRKGSDARIVPGGSSGGSAAAVAARLCFGATATDTGGSIRQPAAFTGTVGIKPTYGRCSRWGIVAFASSLDQAGPIARTVRDAAILMRSMAGHDPKDTTSVDAPVPDYEATLSRGVKGMKIGIPKEYRIEGVPAEIDALWGQGVEWLKDAGATIVDISLPHTRYALPAYYIVAPAEASSNLARYDGVRYGLRVPGKDIVGMYEATRAAGFGKEVRRRIMIGAYVLSAGYYDAYYVRAQKIRTLIKQDFDRAYADGVDAILTPATPSAAFGFGEKGSGDPVEMYLNDVFTVTVNMAGLPGLAVPAGVSAEGLPLGLQLIGRPFDEETLFALASVIEKAAPKIAPPPKWWA</sequence>
<accession>B8EPC1</accession>
<name>GATA_METSB</name>
<comment type="function">
    <text evidence="1">Allows the formation of correctly charged Gln-tRNA(Gln) through the transamidation of misacylated Glu-tRNA(Gln) in organisms which lack glutaminyl-tRNA synthetase. The reaction takes place in the presence of glutamine and ATP through an activated gamma-phospho-Glu-tRNA(Gln).</text>
</comment>
<comment type="catalytic activity">
    <reaction evidence="1">
        <text>L-glutamyl-tRNA(Gln) + L-glutamine + ATP + H2O = L-glutaminyl-tRNA(Gln) + L-glutamate + ADP + phosphate + H(+)</text>
        <dbReference type="Rhea" id="RHEA:17521"/>
        <dbReference type="Rhea" id="RHEA-COMP:9681"/>
        <dbReference type="Rhea" id="RHEA-COMP:9684"/>
        <dbReference type="ChEBI" id="CHEBI:15377"/>
        <dbReference type="ChEBI" id="CHEBI:15378"/>
        <dbReference type="ChEBI" id="CHEBI:29985"/>
        <dbReference type="ChEBI" id="CHEBI:30616"/>
        <dbReference type="ChEBI" id="CHEBI:43474"/>
        <dbReference type="ChEBI" id="CHEBI:58359"/>
        <dbReference type="ChEBI" id="CHEBI:78520"/>
        <dbReference type="ChEBI" id="CHEBI:78521"/>
        <dbReference type="ChEBI" id="CHEBI:456216"/>
        <dbReference type="EC" id="6.3.5.7"/>
    </reaction>
</comment>
<comment type="subunit">
    <text evidence="1">Heterotrimer of A, B and C subunits.</text>
</comment>
<comment type="similarity">
    <text evidence="1">Belongs to the amidase family. GatA subfamily.</text>
</comment>
<proteinExistence type="inferred from homology"/>
<protein>
    <recommendedName>
        <fullName evidence="1">Glutamyl-tRNA(Gln) amidotransferase subunit A</fullName>
        <shortName evidence="1">Glu-ADT subunit A</shortName>
        <ecNumber evidence="1">6.3.5.7</ecNumber>
    </recommendedName>
</protein>
<organism>
    <name type="scientific">Methylocella silvestris (strain DSM 15510 / CIP 108128 / LMG 27833 / NCIMB 13906 / BL2)</name>
    <dbReference type="NCBI Taxonomy" id="395965"/>
    <lineage>
        <taxon>Bacteria</taxon>
        <taxon>Pseudomonadati</taxon>
        <taxon>Pseudomonadota</taxon>
        <taxon>Alphaproteobacteria</taxon>
        <taxon>Hyphomicrobiales</taxon>
        <taxon>Beijerinckiaceae</taxon>
        <taxon>Methylocella</taxon>
    </lineage>
</organism>
<dbReference type="EC" id="6.3.5.7" evidence="1"/>
<dbReference type="EMBL" id="CP001280">
    <property type="protein sequence ID" value="ACK49709.1"/>
    <property type="molecule type" value="Genomic_DNA"/>
</dbReference>
<dbReference type="RefSeq" id="WP_012589779.1">
    <property type="nucleotide sequence ID" value="NC_011666.1"/>
</dbReference>
<dbReference type="SMR" id="B8EPC1"/>
<dbReference type="STRING" id="395965.Msil_0738"/>
<dbReference type="KEGG" id="msl:Msil_0738"/>
<dbReference type="eggNOG" id="COG0154">
    <property type="taxonomic scope" value="Bacteria"/>
</dbReference>
<dbReference type="HOGENOM" id="CLU_009600_0_3_5"/>
<dbReference type="OrthoDB" id="9811471at2"/>
<dbReference type="Proteomes" id="UP000002257">
    <property type="component" value="Chromosome"/>
</dbReference>
<dbReference type="GO" id="GO:0030956">
    <property type="term" value="C:glutamyl-tRNA(Gln) amidotransferase complex"/>
    <property type="evidence" value="ECO:0007669"/>
    <property type="project" value="InterPro"/>
</dbReference>
<dbReference type="GO" id="GO:0005524">
    <property type="term" value="F:ATP binding"/>
    <property type="evidence" value="ECO:0007669"/>
    <property type="project" value="UniProtKB-KW"/>
</dbReference>
<dbReference type="GO" id="GO:0050567">
    <property type="term" value="F:glutaminyl-tRNA synthase (glutamine-hydrolyzing) activity"/>
    <property type="evidence" value="ECO:0007669"/>
    <property type="project" value="UniProtKB-UniRule"/>
</dbReference>
<dbReference type="GO" id="GO:0006412">
    <property type="term" value="P:translation"/>
    <property type="evidence" value="ECO:0007669"/>
    <property type="project" value="UniProtKB-UniRule"/>
</dbReference>
<dbReference type="Gene3D" id="3.90.1300.10">
    <property type="entry name" value="Amidase signature (AS) domain"/>
    <property type="match status" value="1"/>
</dbReference>
<dbReference type="HAMAP" id="MF_00120">
    <property type="entry name" value="GatA"/>
    <property type="match status" value="1"/>
</dbReference>
<dbReference type="InterPro" id="IPR000120">
    <property type="entry name" value="Amidase"/>
</dbReference>
<dbReference type="InterPro" id="IPR020556">
    <property type="entry name" value="Amidase_CS"/>
</dbReference>
<dbReference type="InterPro" id="IPR023631">
    <property type="entry name" value="Amidase_dom"/>
</dbReference>
<dbReference type="InterPro" id="IPR036928">
    <property type="entry name" value="AS_sf"/>
</dbReference>
<dbReference type="InterPro" id="IPR004412">
    <property type="entry name" value="GatA"/>
</dbReference>
<dbReference type="NCBIfam" id="TIGR00132">
    <property type="entry name" value="gatA"/>
    <property type="match status" value="1"/>
</dbReference>
<dbReference type="PANTHER" id="PTHR11895:SF151">
    <property type="entry name" value="GLUTAMYL-TRNA(GLN) AMIDOTRANSFERASE SUBUNIT A"/>
    <property type="match status" value="1"/>
</dbReference>
<dbReference type="PANTHER" id="PTHR11895">
    <property type="entry name" value="TRANSAMIDASE"/>
    <property type="match status" value="1"/>
</dbReference>
<dbReference type="Pfam" id="PF01425">
    <property type="entry name" value="Amidase"/>
    <property type="match status" value="1"/>
</dbReference>
<dbReference type="SUPFAM" id="SSF75304">
    <property type="entry name" value="Amidase signature (AS) enzymes"/>
    <property type="match status" value="1"/>
</dbReference>
<dbReference type="PROSITE" id="PS00571">
    <property type="entry name" value="AMIDASES"/>
    <property type="match status" value="1"/>
</dbReference>
<reference key="1">
    <citation type="journal article" date="2010" name="J. Bacteriol.">
        <title>Complete genome sequence of the aerobic facultative methanotroph Methylocella silvestris BL2.</title>
        <authorList>
            <person name="Chen Y."/>
            <person name="Crombie A."/>
            <person name="Rahman M.T."/>
            <person name="Dedysh S.N."/>
            <person name="Liesack W."/>
            <person name="Stott M.B."/>
            <person name="Alam M."/>
            <person name="Theisen A.R."/>
            <person name="Murrell J.C."/>
            <person name="Dunfield P.F."/>
        </authorList>
    </citation>
    <scope>NUCLEOTIDE SEQUENCE [LARGE SCALE GENOMIC DNA]</scope>
    <source>
        <strain>DSM 15510 / CIP 108128 / LMG 27833 / NCIMB 13906 / BL2</strain>
    </source>
</reference>
<gene>
    <name evidence="1" type="primary">gatA</name>
    <name type="ordered locus">Msil_0738</name>
</gene>
<feature type="chain" id="PRO_1000122484" description="Glutamyl-tRNA(Gln) amidotransferase subunit A">
    <location>
        <begin position="1"/>
        <end position="493"/>
    </location>
</feature>
<feature type="active site" description="Charge relay system" evidence="1">
    <location>
        <position position="78"/>
    </location>
</feature>
<feature type="active site" description="Charge relay system" evidence="1">
    <location>
        <position position="158"/>
    </location>
</feature>
<feature type="active site" description="Acyl-ester intermediate" evidence="1">
    <location>
        <position position="182"/>
    </location>
</feature>
<keyword id="KW-0067">ATP-binding</keyword>
<keyword id="KW-0436">Ligase</keyword>
<keyword id="KW-0547">Nucleotide-binding</keyword>
<keyword id="KW-0648">Protein biosynthesis</keyword>
<keyword id="KW-1185">Reference proteome</keyword>
<evidence type="ECO:0000255" key="1">
    <source>
        <dbReference type="HAMAP-Rule" id="MF_00120"/>
    </source>
</evidence>